<comment type="function">
    <text evidence="1">Transfers the gamma-phosphate of ATP to the 4'-position of a tetraacyldisaccharide 1-phosphate intermediate (termed DS-1-P) to form tetraacyldisaccharide 1,4'-bis-phosphate (lipid IVA).</text>
</comment>
<comment type="catalytic activity">
    <reaction evidence="1">
        <text>a lipid A disaccharide + ATP = a lipid IVA + ADP + H(+)</text>
        <dbReference type="Rhea" id="RHEA:67840"/>
        <dbReference type="ChEBI" id="CHEBI:15378"/>
        <dbReference type="ChEBI" id="CHEBI:30616"/>
        <dbReference type="ChEBI" id="CHEBI:176343"/>
        <dbReference type="ChEBI" id="CHEBI:176425"/>
        <dbReference type="ChEBI" id="CHEBI:456216"/>
        <dbReference type="EC" id="2.7.1.130"/>
    </reaction>
</comment>
<comment type="pathway">
    <text evidence="1">Glycolipid biosynthesis; lipid IV(A) biosynthesis; lipid IV(A) from (3R)-3-hydroxytetradecanoyl-[acyl-carrier-protein] and UDP-N-acetyl-alpha-D-glucosamine: step 6/6.</text>
</comment>
<comment type="similarity">
    <text evidence="1">Belongs to the LpxK family.</text>
</comment>
<keyword id="KW-0067">ATP-binding</keyword>
<keyword id="KW-0418">Kinase</keyword>
<keyword id="KW-0441">Lipid A biosynthesis</keyword>
<keyword id="KW-0444">Lipid biosynthesis</keyword>
<keyword id="KW-0443">Lipid metabolism</keyword>
<keyword id="KW-0547">Nucleotide-binding</keyword>
<keyword id="KW-1185">Reference proteome</keyword>
<keyword id="KW-0808">Transferase</keyword>
<dbReference type="EC" id="2.7.1.130" evidence="1"/>
<dbReference type="EMBL" id="AE017285">
    <property type="protein sequence ID" value="AAS96940.1"/>
    <property type="molecule type" value="Genomic_DNA"/>
</dbReference>
<dbReference type="RefSeq" id="WP_010939738.1">
    <property type="nucleotide sequence ID" value="NC_002937.3"/>
</dbReference>
<dbReference type="RefSeq" id="YP_011680.1">
    <property type="nucleotide sequence ID" value="NC_002937.3"/>
</dbReference>
<dbReference type="SMR" id="Q728Y4"/>
<dbReference type="STRING" id="882.DVU_2468"/>
<dbReference type="PaxDb" id="882-DVU_2468"/>
<dbReference type="EnsemblBacteria" id="AAS96940">
    <property type="protein sequence ID" value="AAS96940"/>
    <property type="gene ID" value="DVU_2468"/>
</dbReference>
<dbReference type="KEGG" id="dvu:DVU_2468"/>
<dbReference type="PATRIC" id="fig|882.5.peg.2231"/>
<dbReference type="eggNOG" id="COG1663">
    <property type="taxonomic scope" value="Bacteria"/>
</dbReference>
<dbReference type="HOGENOM" id="CLU_038816_6_1_7"/>
<dbReference type="OrthoDB" id="9766423at2"/>
<dbReference type="PhylomeDB" id="Q728Y4"/>
<dbReference type="UniPathway" id="UPA00359">
    <property type="reaction ID" value="UER00482"/>
</dbReference>
<dbReference type="Proteomes" id="UP000002194">
    <property type="component" value="Chromosome"/>
</dbReference>
<dbReference type="GO" id="GO:0005886">
    <property type="term" value="C:plasma membrane"/>
    <property type="evidence" value="ECO:0007669"/>
    <property type="project" value="TreeGrafter"/>
</dbReference>
<dbReference type="GO" id="GO:0005524">
    <property type="term" value="F:ATP binding"/>
    <property type="evidence" value="ECO:0007669"/>
    <property type="project" value="UniProtKB-UniRule"/>
</dbReference>
<dbReference type="GO" id="GO:0009029">
    <property type="term" value="F:tetraacyldisaccharide 4'-kinase activity"/>
    <property type="evidence" value="ECO:0007669"/>
    <property type="project" value="UniProtKB-UniRule"/>
</dbReference>
<dbReference type="GO" id="GO:0009245">
    <property type="term" value="P:lipid A biosynthetic process"/>
    <property type="evidence" value="ECO:0007669"/>
    <property type="project" value="UniProtKB-UniRule"/>
</dbReference>
<dbReference type="GO" id="GO:0009244">
    <property type="term" value="P:lipopolysaccharide core region biosynthetic process"/>
    <property type="evidence" value="ECO:0007669"/>
    <property type="project" value="TreeGrafter"/>
</dbReference>
<dbReference type="HAMAP" id="MF_00409">
    <property type="entry name" value="LpxK"/>
    <property type="match status" value="1"/>
</dbReference>
<dbReference type="InterPro" id="IPR003758">
    <property type="entry name" value="LpxK"/>
</dbReference>
<dbReference type="InterPro" id="IPR027417">
    <property type="entry name" value="P-loop_NTPase"/>
</dbReference>
<dbReference type="NCBIfam" id="TIGR00682">
    <property type="entry name" value="lpxK"/>
    <property type="match status" value="1"/>
</dbReference>
<dbReference type="PANTHER" id="PTHR42724">
    <property type="entry name" value="TETRAACYLDISACCHARIDE 4'-KINASE"/>
    <property type="match status" value="1"/>
</dbReference>
<dbReference type="PANTHER" id="PTHR42724:SF1">
    <property type="entry name" value="TETRAACYLDISACCHARIDE 4'-KINASE, MITOCHONDRIAL-RELATED"/>
    <property type="match status" value="1"/>
</dbReference>
<dbReference type="Pfam" id="PF02606">
    <property type="entry name" value="LpxK"/>
    <property type="match status" value="1"/>
</dbReference>
<dbReference type="SUPFAM" id="SSF52540">
    <property type="entry name" value="P-loop containing nucleoside triphosphate hydrolases"/>
    <property type="match status" value="1"/>
</dbReference>
<name>LPXK_NITV2</name>
<proteinExistence type="inferred from homology"/>
<reference key="1">
    <citation type="journal article" date="2004" name="Nat. Biotechnol.">
        <title>The genome sequence of the anaerobic, sulfate-reducing bacterium Desulfovibrio vulgaris Hildenborough.</title>
        <authorList>
            <person name="Heidelberg J.F."/>
            <person name="Seshadri R."/>
            <person name="Haveman S.A."/>
            <person name="Hemme C.L."/>
            <person name="Paulsen I.T."/>
            <person name="Kolonay J.F."/>
            <person name="Eisen J.A."/>
            <person name="Ward N.L."/>
            <person name="Methe B.A."/>
            <person name="Brinkac L.M."/>
            <person name="Daugherty S.C."/>
            <person name="DeBoy R.T."/>
            <person name="Dodson R.J."/>
            <person name="Durkin A.S."/>
            <person name="Madupu R."/>
            <person name="Nelson W.C."/>
            <person name="Sullivan S.A."/>
            <person name="Fouts D.E."/>
            <person name="Haft D.H."/>
            <person name="Selengut J."/>
            <person name="Peterson J.D."/>
            <person name="Davidsen T.M."/>
            <person name="Zafar N."/>
            <person name="Zhou L."/>
            <person name="Radune D."/>
            <person name="Dimitrov G."/>
            <person name="Hance M."/>
            <person name="Tran K."/>
            <person name="Khouri H.M."/>
            <person name="Gill J."/>
            <person name="Utterback T.R."/>
            <person name="Feldblyum T.V."/>
            <person name="Wall J.D."/>
            <person name="Voordouw G."/>
            <person name="Fraser C.M."/>
        </authorList>
    </citation>
    <scope>NUCLEOTIDE SEQUENCE [LARGE SCALE GENOMIC DNA]</scope>
    <source>
        <strain>ATCC 29579 / DSM 644 / CCUG 34227 / NCIMB 8303 / VKM B-1760 / Hildenborough</strain>
    </source>
</reference>
<organism>
    <name type="scientific">Nitratidesulfovibrio vulgaris (strain ATCC 29579 / DSM 644 / CCUG 34227 / NCIMB 8303 / VKM B-1760 / Hildenborough)</name>
    <name type="common">Desulfovibrio vulgaris</name>
    <dbReference type="NCBI Taxonomy" id="882"/>
    <lineage>
        <taxon>Bacteria</taxon>
        <taxon>Pseudomonadati</taxon>
        <taxon>Thermodesulfobacteriota</taxon>
        <taxon>Desulfovibrionia</taxon>
        <taxon>Desulfovibrionales</taxon>
        <taxon>Desulfovibrionaceae</taxon>
        <taxon>Nitratidesulfovibrio</taxon>
    </lineage>
</organism>
<accession>Q728Y4</accession>
<protein>
    <recommendedName>
        <fullName evidence="1">Tetraacyldisaccharide 4'-kinase</fullName>
        <ecNumber evidence="1">2.7.1.130</ecNumber>
    </recommendedName>
    <alternativeName>
        <fullName evidence="1">Lipid A 4'-kinase</fullName>
    </alternativeName>
</protein>
<sequence length="354" mass="39157">MHVAALQNHLAPLLVPCSRVYAACMAVRRRFWESPMSPAFRPSRPVVSVGNIAWGGTGKTPLVDWLLHWAGTRGLNPAVLTRGYGAKPPTVPFLVGSQHTAEEAGDEPLMLARRNPYAAVLVDPVRRRAGRWAEHELRPHFYLLDDGMQHLAVRRDLDLVVLRPDDVLDQWGRVLPAGSWREGASALKSATAFFVKSSPEVFEALAPVLEERLAPYGVPVFSFWLRPSGLLRVGGNEQRPHFDGAPYVLVSGVGGPGQVGETATRYFGYAPVRHRVFPDHHPYGPDDVRSLAQEGAQLVCTPKDAVKLERFAGLDLWTFDLQTVFGPAIGTAAPFPQWWDERWARLARERAGTS</sequence>
<gene>
    <name evidence="1" type="primary">lpxK</name>
    <name type="ordered locus">DVU_2468</name>
</gene>
<evidence type="ECO:0000255" key="1">
    <source>
        <dbReference type="HAMAP-Rule" id="MF_00409"/>
    </source>
</evidence>
<feature type="chain" id="PRO_0000340831" description="Tetraacyldisaccharide 4'-kinase">
    <location>
        <begin position="1"/>
        <end position="354"/>
    </location>
</feature>
<feature type="binding site" evidence="1">
    <location>
        <begin position="53"/>
        <end position="60"/>
    </location>
    <ligand>
        <name>ATP</name>
        <dbReference type="ChEBI" id="CHEBI:30616"/>
    </ligand>
</feature>